<protein>
    <recommendedName>
        <fullName>GTPase Era, mitochondrial</fullName>
    </recommendedName>
    <alternativeName>
        <fullName>ERA-like protein 1</fullName>
    </alternativeName>
</protein>
<evidence type="ECO:0000250" key="1"/>
<evidence type="ECO:0000250" key="2">
    <source>
        <dbReference type="UniProtKB" id="O75616"/>
    </source>
</evidence>
<evidence type="ECO:0000250" key="3">
    <source>
        <dbReference type="UniProtKB" id="P06616"/>
    </source>
</evidence>
<evidence type="ECO:0000255" key="4"/>
<evidence type="ECO:0000255" key="5">
    <source>
        <dbReference type="PROSITE-ProRule" id="PRU01050"/>
    </source>
</evidence>
<evidence type="ECO:0000256" key="6">
    <source>
        <dbReference type="SAM" id="MobiDB-lite"/>
    </source>
</evidence>
<evidence type="ECO:0000303" key="7">
    <source>
    </source>
</evidence>
<evidence type="ECO:0000305" key="8"/>
<keyword id="KW-0025">Alternative splicing</keyword>
<keyword id="KW-0342">GTP-binding</keyword>
<keyword id="KW-0472">Membrane</keyword>
<keyword id="KW-0496">Mitochondrion</keyword>
<keyword id="KW-0999">Mitochondrion inner membrane</keyword>
<keyword id="KW-0547">Nucleotide-binding</keyword>
<keyword id="KW-0597">Phosphoprotein</keyword>
<keyword id="KW-1185">Reference proteome</keyword>
<keyword id="KW-0690">Ribosome biogenesis</keyword>
<keyword id="KW-0694">RNA-binding</keyword>
<keyword id="KW-0699">rRNA-binding</keyword>
<keyword id="KW-0809">Transit peptide</keyword>
<name>ERAL1_RAT</name>
<comment type="function">
    <text evidence="2">Probable GTPase that plays a role in the mitochondrial ribosomal small subunit assembly. Specifically binds the 12S mitochondrial rRNA (12S mt-rRNA) to a 33 nucleotide section delineating the 3' terminal stem-loop region. May act as a chaperone that protects the 12S mt-rRNA on the 28S mitoribosomal subunit during ribosomal small subunit assembly (By similarity).</text>
</comment>
<comment type="subcellular location">
    <subcellularLocation>
        <location evidence="1">Mitochondrion matrix</location>
    </subcellularLocation>
    <subcellularLocation>
        <location evidence="1">Mitochondrion inner membrane</location>
        <topology evidence="1">Peripheral membrane protein</topology>
    </subcellularLocation>
    <text evidence="1">Localizes on the matrix side on the mitochondrial inner membrane.</text>
</comment>
<comment type="alternative products">
    <event type="alternative splicing"/>
    <isoform>
        <id>Q5EBA0-1</id>
        <name>1</name>
        <sequence type="displayed"/>
    </isoform>
    <isoform>
        <id>Q5EBA0-2</id>
        <name>2</name>
        <sequence type="described" ref="VSP_040578"/>
    </isoform>
</comment>
<comment type="similarity">
    <text evidence="5 8">Belongs to the TRAFAC class TrmE-Era-EngA-EngB-Septin-like GTPase superfamily. Era GTPase family.</text>
</comment>
<proteinExistence type="evidence at transcript level"/>
<gene>
    <name type="primary">Eral1</name>
</gene>
<dbReference type="EMBL" id="BC089885">
    <property type="protein sequence ID" value="AAH89885.1"/>
    <property type="molecule type" value="mRNA"/>
</dbReference>
<dbReference type="RefSeq" id="NP_001013247.1">
    <molecule id="Q5EBA0-2"/>
    <property type="nucleotide sequence ID" value="NM_001013229.2"/>
</dbReference>
<dbReference type="RefSeq" id="NP_001386405.1">
    <molecule id="Q5EBA0-1"/>
    <property type="nucleotide sequence ID" value="NM_001399476.1"/>
</dbReference>
<dbReference type="SMR" id="Q5EBA0"/>
<dbReference type="FunCoup" id="Q5EBA0">
    <property type="interactions" value="2483"/>
</dbReference>
<dbReference type="STRING" id="10116.ENSRNOP00000014386"/>
<dbReference type="PhosphoSitePlus" id="Q5EBA0"/>
<dbReference type="PaxDb" id="10116-ENSRNOP00000014386"/>
<dbReference type="GeneID" id="363646"/>
<dbReference type="KEGG" id="rno:363646"/>
<dbReference type="AGR" id="RGD:1304714"/>
<dbReference type="CTD" id="26284"/>
<dbReference type="RGD" id="1304714">
    <property type="gene designation" value="Eral1"/>
</dbReference>
<dbReference type="VEuPathDB" id="HostDB:ENSRNOG00000010673"/>
<dbReference type="eggNOG" id="KOG1423">
    <property type="taxonomic scope" value="Eukaryota"/>
</dbReference>
<dbReference type="InParanoid" id="Q5EBA0"/>
<dbReference type="PhylomeDB" id="Q5EBA0"/>
<dbReference type="Reactome" id="R-RNO-5389840">
    <property type="pathway name" value="Mitochondrial translation elongation"/>
</dbReference>
<dbReference type="Reactome" id="R-RNO-5419276">
    <property type="pathway name" value="Mitochondrial translation termination"/>
</dbReference>
<dbReference type="PRO" id="PR:Q5EBA0"/>
<dbReference type="Proteomes" id="UP000002494">
    <property type="component" value="Chromosome 10"/>
</dbReference>
<dbReference type="Bgee" id="ENSRNOG00000010673">
    <property type="expression patterns" value="Expressed in skeletal muscle tissue and 18 other cell types or tissues"/>
</dbReference>
<dbReference type="GO" id="GO:0005743">
    <property type="term" value="C:mitochondrial inner membrane"/>
    <property type="evidence" value="ECO:0007669"/>
    <property type="project" value="UniProtKB-SubCell"/>
</dbReference>
<dbReference type="GO" id="GO:0005759">
    <property type="term" value="C:mitochondrial matrix"/>
    <property type="evidence" value="ECO:0000250"/>
    <property type="project" value="UniProtKB"/>
</dbReference>
<dbReference type="GO" id="GO:0005525">
    <property type="term" value="F:GTP binding"/>
    <property type="evidence" value="ECO:0007669"/>
    <property type="project" value="UniProtKB-KW"/>
</dbReference>
<dbReference type="GO" id="GO:0043024">
    <property type="term" value="F:ribosomal small subunit binding"/>
    <property type="evidence" value="ECO:0000250"/>
    <property type="project" value="UniProtKB"/>
</dbReference>
<dbReference type="GO" id="GO:0019843">
    <property type="term" value="F:rRNA binding"/>
    <property type="evidence" value="ECO:0000250"/>
    <property type="project" value="UniProtKB"/>
</dbReference>
<dbReference type="GO" id="GO:0000028">
    <property type="term" value="P:ribosomal small subunit assembly"/>
    <property type="evidence" value="ECO:0000250"/>
    <property type="project" value="UniProtKB"/>
</dbReference>
<dbReference type="CDD" id="cd04163">
    <property type="entry name" value="Era"/>
    <property type="match status" value="1"/>
</dbReference>
<dbReference type="CDD" id="cd22534">
    <property type="entry name" value="KH-II_Era"/>
    <property type="match status" value="1"/>
</dbReference>
<dbReference type="FunFam" id="3.30.300.20:FF:000016">
    <property type="entry name" value="GTPase Era, mitochondrial isoform 1"/>
    <property type="match status" value="1"/>
</dbReference>
<dbReference type="FunFam" id="3.40.50.300:FF:001024">
    <property type="entry name" value="GTPase Era, mitochondrial isoform 1"/>
    <property type="match status" value="1"/>
</dbReference>
<dbReference type="Gene3D" id="3.30.300.20">
    <property type="match status" value="1"/>
</dbReference>
<dbReference type="Gene3D" id="3.40.50.300">
    <property type="entry name" value="P-loop containing nucleotide triphosphate hydrolases"/>
    <property type="match status" value="1"/>
</dbReference>
<dbReference type="HAMAP" id="MF_00367">
    <property type="entry name" value="GTPase_Era"/>
    <property type="match status" value="1"/>
</dbReference>
<dbReference type="InterPro" id="IPR030388">
    <property type="entry name" value="G_ERA_dom"/>
</dbReference>
<dbReference type="InterPro" id="IPR006073">
    <property type="entry name" value="GTP-bd"/>
</dbReference>
<dbReference type="InterPro" id="IPR005662">
    <property type="entry name" value="GTPase_Era-like"/>
</dbReference>
<dbReference type="InterPro" id="IPR015946">
    <property type="entry name" value="KH_dom-like_a/b"/>
</dbReference>
<dbReference type="InterPro" id="IPR004044">
    <property type="entry name" value="KH_dom_type_2"/>
</dbReference>
<dbReference type="InterPro" id="IPR009019">
    <property type="entry name" value="KH_sf_prok-type"/>
</dbReference>
<dbReference type="InterPro" id="IPR027417">
    <property type="entry name" value="P-loop_NTPase"/>
</dbReference>
<dbReference type="InterPro" id="IPR005225">
    <property type="entry name" value="Small_GTP-bd"/>
</dbReference>
<dbReference type="NCBIfam" id="TIGR00231">
    <property type="entry name" value="small_GTP"/>
    <property type="match status" value="1"/>
</dbReference>
<dbReference type="PANTHER" id="PTHR42698">
    <property type="entry name" value="GTPASE ERA"/>
    <property type="match status" value="1"/>
</dbReference>
<dbReference type="PANTHER" id="PTHR42698:SF1">
    <property type="entry name" value="GTPASE ERA, MITOCHONDRIAL"/>
    <property type="match status" value="1"/>
</dbReference>
<dbReference type="Pfam" id="PF07650">
    <property type="entry name" value="KH_2"/>
    <property type="match status" value="1"/>
</dbReference>
<dbReference type="Pfam" id="PF01926">
    <property type="entry name" value="MMR_HSR1"/>
    <property type="match status" value="1"/>
</dbReference>
<dbReference type="PRINTS" id="PR00326">
    <property type="entry name" value="GTP1OBG"/>
</dbReference>
<dbReference type="SUPFAM" id="SSF52540">
    <property type="entry name" value="P-loop containing nucleoside triphosphate hydrolases"/>
    <property type="match status" value="1"/>
</dbReference>
<dbReference type="SUPFAM" id="SSF54814">
    <property type="entry name" value="Prokaryotic type KH domain (KH-domain type II)"/>
    <property type="match status" value="1"/>
</dbReference>
<dbReference type="PROSITE" id="PS51713">
    <property type="entry name" value="G_ERA"/>
    <property type="match status" value="1"/>
</dbReference>
<reference key="1">
    <citation type="journal article" date="2004" name="Nature">
        <title>Genome sequence of the Brown Norway rat yields insights into mammalian evolution.</title>
        <authorList>
            <person name="Gibbs R.A."/>
            <person name="Weinstock G.M."/>
            <person name="Metzker M.L."/>
            <person name="Muzny D.M."/>
            <person name="Sodergren E.J."/>
            <person name="Scherer S."/>
            <person name="Scott G."/>
            <person name="Steffen D."/>
            <person name="Worley K.C."/>
            <person name="Burch P.E."/>
            <person name="Okwuonu G."/>
            <person name="Hines S."/>
            <person name="Lewis L."/>
            <person name="Deramo C."/>
            <person name="Delgado O."/>
            <person name="Dugan-Rocha S."/>
            <person name="Miner G."/>
            <person name="Morgan M."/>
            <person name="Hawes A."/>
            <person name="Gill R."/>
            <person name="Holt R.A."/>
            <person name="Adams M.D."/>
            <person name="Amanatides P.G."/>
            <person name="Baden-Tillson H."/>
            <person name="Barnstead M."/>
            <person name="Chin S."/>
            <person name="Evans C.A."/>
            <person name="Ferriera S."/>
            <person name="Fosler C."/>
            <person name="Glodek A."/>
            <person name="Gu Z."/>
            <person name="Jennings D."/>
            <person name="Kraft C.L."/>
            <person name="Nguyen T."/>
            <person name="Pfannkoch C.M."/>
            <person name="Sitter C."/>
            <person name="Sutton G.G."/>
            <person name="Venter J.C."/>
            <person name="Woodage T."/>
            <person name="Smith D."/>
            <person name="Lee H.-M."/>
            <person name="Gustafson E."/>
            <person name="Cahill P."/>
            <person name="Kana A."/>
            <person name="Doucette-Stamm L."/>
            <person name="Weinstock K."/>
            <person name="Fechtel K."/>
            <person name="Weiss R.B."/>
            <person name="Dunn D.M."/>
            <person name="Green E.D."/>
            <person name="Blakesley R.W."/>
            <person name="Bouffard G.G."/>
            <person name="De Jong P.J."/>
            <person name="Osoegawa K."/>
            <person name="Zhu B."/>
            <person name="Marra M."/>
            <person name="Schein J."/>
            <person name="Bosdet I."/>
            <person name="Fjell C."/>
            <person name="Jones S."/>
            <person name="Krzywinski M."/>
            <person name="Mathewson C."/>
            <person name="Siddiqui A."/>
            <person name="Wye N."/>
            <person name="McPherson J."/>
            <person name="Zhao S."/>
            <person name="Fraser C.M."/>
            <person name="Shetty J."/>
            <person name="Shatsman S."/>
            <person name="Geer K."/>
            <person name="Chen Y."/>
            <person name="Abramzon S."/>
            <person name="Nierman W.C."/>
            <person name="Havlak P.H."/>
            <person name="Chen R."/>
            <person name="Durbin K.J."/>
            <person name="Egan A."/>
            <person name="Ren Y."/>
            <person name="Song X.-Z."/>
            <person name="Li B."/>
            <person name="Liu Y."/>
            <person name="Qin X."/>
            <person name="Cawley S."/>
            <person name="Cooney A.J."/>
            <person name="D'Souza L.M."/>
            <person name="Martin K."/>
            <person name="Wu J.Q."/>
            <person name="Gonzalez-Garay M.L."/>
            <person name="Jackson A.R."/>
            <person name="Kalafus K.J."/>
            <person name="McLeod M.P."/>
            <person name="Milosavljevic A."/>
            <person name="Virk D."/>
            <person name="Volkov A."/>
            <person name="Wheeler D.A."/>
            <person name="Zhang Z."/>
            <person name="Bailey J.A."/>
            <person name="Eichler E.E."/>
            <person name="Tuzun E."/>
            <person name="Birney E."/>
            <person name="Mongin E."/>
            <person name="Ureta-Vidal A."/>
            <person name="Woodwark C."/>
            <person name="Zdobnov E."/>
            <person name="Bork P."/>
            <person name="Suyama M."/>
            <person name="Torrents D."/>
            <person name="Alexandersson M."/>
            <person name="Trask B.J."/>
            <person name="Young J.M."/>
            <person name="Huang H."/>
            <person name="Wang H."/>
            <person name="Xing H."/>
            <person name="Daniels S."/>
            <person name="Gietzen D."/>
            <person name="Schmidt J."/>
            <person name="Stevens K."/>
            <person name="Vitt U."/>
            <person name="Wingrove J."/>
            <person name="Camara F."/>
            <person name="Mar Alba M."/>
            <person name="Abril J.F."/>
            <person name="Guigo R."/>
            <person name="Smit A."/>
            <person name="Dubchak I."/>
            <person name="Rubin E.M."/>
            <person name="Couronne O."/>
            <person name="Poliakov A."/>
            <person name="Huebner N."/>
            <person name="Ganten D."/>
            <person name="Goesele C."/>
            <person name="Hummel O."/>
            <person name="Kreitler T."/>
            <person name="Lee Y.-A."/>
            <person name="Monti J."/>
            <person name="Schulz H."/>
            <person name="Zimdahl H."/>
            <person name="Himmelbauer H."/>
            <person name="Lehrach H."/>
            <person name="Jacob H.J."/>
            <person name="Bromberg S."/>
            <person name="Gullings-Handley J."/>
            <person name="Jensen-Seaman M.I."/>
            <person name="Kwitek A.E."/>
            <person name="Lazar J."/>
            <person name="Pasko D."/>
            <person name="Tonellato P.J."/>
            <person name="Twigger S."/>
            <person name="Ponting C.P."/>
            <person name="Duarte J.M."/>
            <person name="Rice S."/>
            <person name="Goodstadt L."/>
            <person name="Beatson S.A."/>
            <person name="Emes R.D."/>
            <person name="Winter E.E."/>
            <person name="Webber C."/>
            <person name="Brandt P."/>
            <person name="Nyakatura G."/>
            <person name="Adetobi M."/>
            <person name="Chiaromonte F."/>
            <person name="Elnitski L."/>
            <person name="Eswara P."/>
            <person name="Hardison R.C."/>
            <person name="Hou M."/>
            <person name="Kolbe D."/>
            <person name="Makova K."/>
            <person name="Miller W."/>
            <person name="Nekrutenko A."/>
            <person name="Riemer C."/>
            <person name="Schwartz S."/>
            <person name="Taylor J."/>
            <person name="Yang S."/>
            <person name="Zhang Y."/>
            <person name="Lindpaintner K."/>
            <person name="Andrews T.D."/>
            <person name="Caccamo M."/>
            <person name="Clamp M."/>
            <person name="Clarke L."/>
            <person name="Curwen V."/>
            <person name="Durbin R.M."/>
            <person name="Eyras E."/>
            <person name="Searle S.M."/>
            <person name="Cooper G.M."/>
            <person name="Batzoglou S."/>
            <person name="Brudno M."/>
            <person name="Sidow A."/>
            <person name="Stone E.A."/>
            <person name="Payseur B.A."/>
            <person name="Bourque G."/>
            <person name="Lopez-Otin C."/>
            <person name="Puente X.S."/>
            <person name="Chakrabarti K."/>
            <person name="Chatterji S."/>
            <person name="Dewey C."/>
            <person name="Pachter L."/>
            <person name="Bray N."/>
            <person name="Yap V.B."/>
            <person name="Caspi A."/>
            <person name="Tesler G."/>
            <person name="Pevzner P.A."/>
            <person name="Haussler D."/>
            <person name="Roskin K.M."/>
            <person name="Baertsch R."/>
            <person name="Clawson H."/>
            <person name="Furey T.S."/>
            <person name="Hinrichs A.S."/>
            <person name="Karolchik D."/>
            <person name="Kent W.J."/>
            <person name="Rosenbloom K.R."/>
            <person name="Trumbower H."/>
            <person name="Weirauch M."/>
            <person name="Cooper D.N."/>
            <person name="Stenson P.D."/>
            <person name="Ma B."/>
            <person name="Brent M."/>
            <person name="Arumugam M."/>
            <person name="Shteynberg D."/>
            <person name="Copley R.R."/>
            <person name="Taylor M.S."/>
            <person name="Riethman H."/>
            <person name="Mudunuri U."/>
            <person name="Peterson J."/>
            <person name="Guyer M."/>
            <person name="Felsenfeld A."/>
            <person name="Old S."/>
            <person name="Mockrin S."/>
            <person name="Collins F.S."/>
        </authorList>
    </citation>
    <scope>NUCLEOTIDE SEQUENCE [LARGE SCALE GENOMIC DNA]</scope>
    <source>
        <strain>Brown Norway</strain>
    </source>
</reference>
<reference key="2">
    <citation type="journal article" date="2004" name="Genome Res.">
        <title>The status, quality, and expansion of the NIH full-length cDNA project: the Mammalian Gene Collection (MGC).</title>
        <authorList>
            <consortium name="The MGC Project Team"/>
        </authorList>
    </citation>
    <scope>NUCLEOTIDE SEQUENCE [LARGE SCALE MRNA] (ISOFORM 2)</scope>
    <source>
        <tissue>Liver</tissue>
    </source>
</reference>
<accession>Q5EBA0</accession>
<accession>D4A9P4</accession>
<accession>D4ADH1</accession>
<feature type="transit peptide" description="Mitochondrion" evidence="4">
    <location>
        <begin position="1"/>
        <end position="20"/>
    </location>
</feature>
<feature type="chain" id="PRO_0000404546" description="GTPase Era, mitochondrial">
    <location>
        <begin position="21"/>
        <end position="437"/>
    </location>
</feature>
<feature type="domain" description="Era-type G" evidence="5">
    <location>
        <begin position="112"/>
        <end position="330"/>
    </location>
</feature>
<feature type="domain" description="KH type-2">
    <location>
        <begin position="360"/>
        <end position="437"/>
    </location>
</feature>
<feature type="region of interest" description="G1" evidence="5">
    <location>
        <begin position="120"/>
        <end position="127"/>
    </location>
</feature>
<feature type="region of interest" description="G2" evidence="5">
    <location>
        <begin position="146"/>
        <end position="150"/>
    </location>
</feature>
<feature type="region of interest" description="G3" evidence="5">
    <location>
        <begin position="167"/>
        <end position="170"/>
    </location>
</feature>
<feature type="region of interest" description="G4" evidence="5">
    <location>
        <begin position="236"/>
        <end position="239"/>
    </location>
</feature>
<feature type="region of interest" description="Disordered" evidence="6">
    <location>
        <begin position="272"/>
        <end position="293"/>
    </location>
</feature>
<feature type="region of interest" description="G5" evidence="5">
    <location>
        <begin position="308"/>
        <end position="310"/>
    </location>
</feature>
<feature type="binding site" evidence="3">
    <location>
        <begin position="120"/>
        <end position="127"/>
    </location>
    <ligand>
        <name>GTP</name>
        <dbReference type="ChEBI" id="CHEBI:37565"/>
    </ligand>
</feature>
<feature type="binding site" evidence="3">
    <location>
        <begin position="167"/>
        <end position="171"/>
    </location>
    <ligand>
        <name>GTP</name>
        <dbReference type="ChEBI" id="CHEBI:37565"/>
    </ligand>
</feature>
<feature type="binding site" evidence="3">
    <location>
        <begin position="236"/>
        <end position="239"/>
    </location>
    <ligand>
        <name>GTP</name>
        <dbReference type="ChEBI" id="CHEBI:37565"/>
    </ligand>
</feature>
<feature type="modified residue" description="Phosphoserine" evidence="2">
    <location>
        <position position="173"/>
    </location>
</feature>
<feature type="splice variant" id="VSP_040578" description="In isoform 2." evidence="7">
    <location>
        <begin position="321"/>
        <end position="326"/>
    </location>
</feature>
<sequence>MAAPRRYFPGIVRALLGAWQVGSHAGREWVSPPGSLLGNHVRCVSCVVGATFSGPLLASASSRYGQDSALDRILGFPQPDSSLVPCVPAVSVHRDEQNLLLVHTPDMPENPRVLRVVLLGAPNAGKSTLSNQLLGRKVFPVSKKVHTTRCQALGVITEKETQVILLDTPGIISPVKQKRHHLELSLLEDPWKSMESADLVVVLVDVSDKWTRSRLSPQVLQCLTKFSQVPSILVLNKVDCLKQKSVLLELTAALTEGVVNGKMLNVRQAFRSRPSTHCPGPETEDPNTHAVRSPQRTGWPYFQEIFMLSALNNKDVNTLKQYLLTQAQPGPWEFHSGVLTSQTPEEICANKIREKLLEYLPEEVPYSVQQKTVIWEEGPSGELVIQQNLLVPKESHVRILIGQKGLLISQIAQEVSQDLMDIFLCDVLLRLSVKLLK</sequence>
<organism>
    <name type="scientific">Rattus norvegicus</name>
    <name type="common">Rat</name>
    <dbReference type="NCBI Taxonomy" id="10116"/>
    <lineage>
        <taxon>Eukaryota</taxon>
        <taxon>Metazoa</taxon>
        <taxon>Chordata</taxon>
        <taxon>Craniata</taxon>
        <taxon>Vertebrata</taxon>
        <taxon>Euteleostomi</taxon>
        <taxon>Mammalia</taxon>
        <taxon>Eutheria</taxon>
        <taxon>Euarchontoglires</taxon>
        <taxon>Glires</taxon>
        <taxon>Rodentia</taxon>
        <taxon>Myomorpha</taxon>
        <taxon>Muroidea</taxon>
        <taxon>Muridae</taxon>
        <taxon>Murinae</taxon>
        <taxon>Rattus</taxon>
    </lineage>
</organism>